<evidence type="ECO:0000255" key="1">
    <source>
        <dbReference type="HAMAP-Rule" id="MF_00503"/>
    </source>
</evidence>
<evidence type="ECO:0000305" key="2"/>
<accession>A4SVX9</accession>
<dbReference type="EMBL" id="CP000655">
    <property type="protein sequence ID" value="ABP33643.1"/>
    <property type="molecule type" value="Genomic_DNA"/>
</dbReference>
<dbReference type="RefSeq" id="WP_011902268.1">
    <property type="nucleotide sequence ID" value="NC_009379.1"/>
</dbReference>
<dbReference type="SMR" id="A4SVX9"/>
<dbReference type="GeneID" id="31480776"/>
<dbReference type="KEGG" id="pnu:Pnuc_0423"/>
<dbReference type="eggNOG" id="COG0359">
    <property type="taxonomic scope" value="Bacteria"/>
</dbReference>
<dbReference type="HOGENOM" id="CLU_078938_4_1_4"/>
<dbReference type="Proteomes" id="UP000000231">
    <property type="component" value="Chromosome"/>
</dbReference>
<dbReference type="GO" id="GO:1990904">
    <property type="term" value="C:ribonucleoprotein complex"/>
    <property type="evidence" value="ECO:0007669"/>
    <property type="project" value="UniProtKB-KW"/>
</dbReference>
<dbReference type="GO" id="GO:0005840">
    <property type="term" value="C:ribosome"/>
    <property type="evidence" value="ECO:0007669"/>
    <property type="project" value="UniProtKB-KW"/>
</dbReference>
<dbReference type="GO" id="GO:0019843">
    <property type="term" value="F:rRNA binding"/>
    <property type="evidence" value="ECO:0007669"/>
    <property type="project" value="UniProtKB-UniRule"/>
</dbReference>
<dbReference type="GO" id="GO:0003735">
    <property type="term" value="F:structural constituent of ribosome"/>
    <property type="evidence" value="ECO:0007669"/>
    <property type="project" value="InterPro"/>
</dbReference>
<dbReference type="GO" id="GO:0006412">
    <property type="term" value="P:translation"/>
    <property type="evidence" value="ECO:0007669"/>
    <property type="project" value="UniProtKB-UniRule"/>
</dbReference>
<dbReference type="Gene3D" id="3.10.430.100">
    <property type="entry name" value="Ribosomal protein L9, C-terminal domain"/>
    <property type="match status" value="1"/>
</dbReference>
<dbReference type="Gene3D" id="3.40.5.10">
    <property type="entry name" value="Ribosomal protein L9, N-terminal domain"/>
    <property type="match status" value="1"/>
</dbReference>
<dbReference type="HAMAP" id="MF_00503">
    <property type="entry name" value="Ribosomal_bL9"/>
    <property type="match status" value="1"/>
</dbReference>
<dbReference type="InterPro" id="IPR000244">
    <property type="entry name" value="Ribosomal_bL9"/>
</dbReference>
<dbReference type="InterPro" id="IPR009027">
    <property type="entry name" value="Ribosomal_bL9/RNase_H1_N"/>
</dbReference>
<dbReference type="InterPro" id="IPR020594">
    <property type="entry name" value="Ribosomal_bL9_bac/chp"/>
</dbReference>
<dbReference type="InterPro" id="IPR020069">
    <property type="entry name" value="Ribosomal_bL9_C"/>
</dbReference>
<dbReference type="InterPro" id="IPR036791">
    <property type="entry name" value="Ribosomal_bL9_C_sf"/>
</dbReference>
<dbReference type="InterPro" id="IPR020070">
    <property type="entry name" value="Ribosomal_bL9_N"/>
</dbReference>
<dbReference type="InterPro" id="IPR036935">
    <property type="entry name" value="Ribosomal_bL9_N_sf"/>
</dbReference>
<dbReference type="NCBIfam" id="TIGR00158">
    <property type="entry name" value="L9"/>
    <property type="match status" value="1"/>
</dbReference>
<dbReference type="PANTHER" id="PTHR21368">
    <property type="entry name" value="50S RIBOSOMAL PROTEIN L9"/>
    <property type="match status" value="1"/>
</dbReference>
<dbReference type="Pfam" id="PF03948">
    <property type="entry name" value="Ribosomal_L9_C"/>
    <property type="match status" value="1"/>
</dbReference>
<dbReference type="Pfam" id="PF01281">
    <property type="entry name" value="Ribosomal_L9_N"/>
    <property type="match status" value="1"/>
</dbReference>
<dbReference type="SUPFAM" id="SSF55658">
    <property type="entry name" value="L9 N-domain-like"/>
    <property type="match status" value="1"/>
</dbReference>
<dbReference type="SUPFAM" id="SSF55653">
    <property type="entry name" value="Ribosomal protein L9 C-domain"/>
    <property type="match status" value="1"/>
</dbReference>
<dbReference type="PROSITE" id="PS00651">
    <property type="entry name" value="RIBOSOMAL_L9"/>
    <property type="match status" value="1"/>
</dbReference>
<name>RL9_POLAQ</name>
<gene>
    <name evidence="1" type="primary">rplI</name>
    <name type="ordered locus">Pnuc_0423</name>
</gene>
<comment type="function">
    <text evidence="1">Binds to the 23S rRNA.</text>
</comment>
<comment type="similarity">
    <text evidence="1">Belongs to the bacterial ribosomal protein bL9 family.</text>
</comment>
<keyword id="KW-1185">Reference proteome</keyword>
<keyword id="KW-0687">Ribonucleoprotein</keyword>
<keyword id="KW-0689">Ribosomal protein</keyword>
<keyword id="KW-0694">RNA-binding</keyword>
<keyword id="KW-0699">rRNA-binding</keyword>
<feature type="chain" id="PRO_1000081491" description="Large ribosomal subunit protein bL9">
    <location>
        <begin position="1"/>
        <end position="150"/>
    </location>
</feature>
<sequence length="150" mass="16035">MQIILLEKVTNLGNLGDVVRVKDGFARNFLIPQRKARRATEAAIADFAVRRAELEKLAAEKLAAAEAVGTKLKDLVLEIGQKAGVDGRLFGSVTNHDIADALKAKGFTIEKSSVRMPTGPLKMVGDHPVAVAVHTDVVADITIRVVGEQA</sequence>
<protein>
    <recommendedName>
        <fullName evidence="1">Large ribosomal subunit protein bL9</fullName>
    </recommendedName>
    <alternativeName>
        <fullName evidence="2">50S ribosomal protein L9</fullName>
    </alternativeName>
</protein>
<reference key="1">
    <citation type="journal article" date="2012" name="Stand. Genomic Sci.">
        <title>Complete genome sequence of Polynucleobacter necessarius subsp. asymbioticus type strain (QLW-P1DMWA-1(T)).</title>
        <authorList>
            <person name="Meincke L."/>
            <person name="Copeland A."/>
            <person name="Lapidus A."/>
            <person name="Lucas S."/>
            <person name="Berry K.W."/>
            <person name="Del Rio T.G."/>
            <person name="Hammon N."/>
            <person name="Dalin E."/>
            <person name="Tice H."/>
            <person name="Pitluck S."/>
            <person name="Richardson P."/>
            <person name="Bruce D."/>
            <person name="Goodwin L."/>
            <person name="Han C."/>
            <person name="Tapia R."/>
            <person name="Detter J.C."/>
            <person name="Schmutz J."/>
            <person name="Brettin T."/>
            <person name="Larimer F."/>
            <person name="Land M."/>
            <person name="Hauser L."/>
            <person name="Kyrpides N.C."/>
            <person name="Ivanova N."/>
            <person name="Goker M."/>
            <person name="Woyke T."/>
            <person name="Wu Q.L."/>
            <person name="Pockl M."/>
            <person name="Hahn M.W."/>
            <person name="Klenk H.P."/>
        </authorList>
    </citation>
    <scope>NUCLEOTIDE SEQUENCE [LARGE SCALE GENOMIC DNA]</scope>
    <source>
        <strain>DSM 18221 / CIP 109841 / QLW-P1DMWA-1</strain>
    </source>
</reference>
<organism>
    <name type="scientific">Polynucleobacter asymbioticus (strain DSM 18221 / CIP 109841 / QLW-P1DMWA-1)</name>
    <name type="common">Polynucleobacter necessarius subsp. asymbioticus</name>
    <dbReference type="NCBI Taxonomy" id="312153"/>
    <lineage>
        <taxon>Bacteria</taxon>
        <taxon>Pseudomonadati</taxon>
        <taxon>Pseudomonadota</taxon>
        <taxon>Betaproteobacteria</taxon>
        <taxon>Burkholderiales</taxon>
        <taxon>Burkholderiaceae</taxon>
        <taxon>Polynucleobacter</taxon>
    </lineage>
</organism>
<proteinExistence type="inferred from homology"/>